<name>TFIP8_MOUSE</name>
<gene>
    <name type="primary">Tnfaip8</name>
</gene>
<comment type="function">
    <text evidence="1">Acts as a negative mediator of apoptosis. Suppresses the TNF-mediated apoptosis by inhibiting caspase-8 activity but not the processing of procaspase-8, subsequently resulting in inhibition of BID cleavage and caspase-3 activation (By similarity).</text>
</comment>
<comment type="subcellular location">
    <subcellularLocation>
        <location evidence="1">Cytoplasm</location>
    </subcellularLocation>
</comment>
<comment type="alternative products">
    <event type="alternative splicing"/>
    <isoform>
        <id>Q921Z5-1</id>
        <name>1</name>
        <sequence type="displayed"/>
    </isoform>
    <isoform>
        <id>Q921Z5-2</id>
        <name>2</name>
        <sequence type="described" ref="VSP_024900 VSP_024901"/>
    </isoform>
</comment>
<comment type="similarity">
    <text evidence="4">Belongs to the TNFAIP8 family.</text>
</comment>
<dbReference type="EMBL" id="AK090316">
    <property type="protein sequence ID" value="BAC41167.1"/>
    <property type="molecule type" value="mRNA"/>
</dbReference>
<dbReference type="EMBL" id="AK149901">
    <property type="protein sequence ID" value="BAE29154.1"/>
    <property type="molecule type" value="mRNA"/>
</dbReference>
<dbReference type="EMBL" id="AK150445">
    <property type="protein sequence ID" value="BAE29567.1"/>
    <property type="molecule type" value="mRNA"/>
</dbReference>
<dbReference type="EMBL" id="AK150965">
    <property type="protein sequence ID" value="BAE29996.1"/>
    <property type="molecule type" value="mRNA"/>
</dbReference>
<dbReference type="EMBL" id="AK151622">
    <property type="protein sequence ID" value="BAE30559.1"/>
    <property type="molecule type" value="mRNA"/>
</dbReference>
<dbReference type="EMBL" id="AK152426">
    <property type="protein sequence ID" value="BAE31209.1"/>
    <property type="molecule type" value="mRNA"/>
</dbReference>
<dbReference type="EMBL" id="AK163339">
    <property type="protein sequence ID" value="BAE37307.1"/>
    <property type="molecule type" value="mRNA"/>
</dbReference>
<dbReference type="EMBL" id="BC009090">
    <property type="protein sequence ID" value="AAH09090.1"/>
    <property type="molecule type" value="mRNA"/>
</dbReference>
<dbReference type="CCDS" id="CCDS50287.1">
    <molecule id="Q921Z5-2"/>
</dbReference>
<dbReference type="RefSeq" id="NP_001171231.1">
    <molecule id="Q921Z5-2"/>
    <property type="nucleotide sequence ID" value="NM_001177760.1"/>
</dbReference>
<dbReference type="RefSeq" id="NP_598892.2">
    <property type="nucleotide sequence ID" value="NM_134131.2"/>
</dbReference>
<dbReference type="PDB" id="5JXD">
    <property type="method" value="X-ray"/>
    <property type="resolution" value="2.03 A"/>
    <property type="chains" value="A=1-198"/>
</dbReference>
<dbReference type="PDBsum" id="5JXD"/>
<dbReference type="SMR" id="Q921Z5"/>
<dbReference type="BioGRID" id="223149">
    <property type="interactions" value="24"/>
</dbReference>
<dbReference type="FunCoup" id="Q921Z5">
    <property type="interactions" value="2376"/>
</dbReference>
<dbReference type="IntAct" id="Q921Z5">
    <property type="interactions" value="1"/>
</dbReference>
<dbReference type="MINT" id="Q921Z5"/>
<dbReference type="PhosphoSitePlus" id="Q921Z5"/>
<dbReference type="jPOST" id="Q921Z5"/>
<dbReference type="PaxDb" id="10090-ENSMUSP00000119041"/>
<dbReference type="PeptideAtlas" id="Q921Z5"/>
<dbReference type="ProteomicsDB" id="262800">
    <molecule id="Q921Z5-1"/>
</dbReference>
<dbReference type="ProteomicsDB" id="262801">
    <molecule id="Q921Z5-2"/>
</dbReference>
<dbReference type="Pumba" id="Q921Z5"/>
<dbReference type="Antibodypedia" id="25539">
    <property type="antibodies" value="257 antibodies from 32 providers"/>
</dbReference>
<dbReference type="DNASU" id="106869"/>
<dbReference type="Ensembl" id="ENSMUST00000179937.2">
    <molecule id="Q921Z5-2"/>
    <property type="protein sequence ID" value="ENSMUSP00000136030.2"/>
    <property type="gene ID" value="ENSMUSG00000062210.15"/>
</dbReference>
<dbReference type="GeneID" id="106869"/>
<dbReference type="KEGG" id="mmu:106869"/>
<dbReference type="UCSC" id="uc008ewq.2">
    <molecule id="Q921Z5-2"/>
    <property type="organism name" value="mouse"/>
</dbReference>
<dbReference type="AGR" id="MGI:2147191"/>
<dbReference type="CTD" id="25816"/>
<dbReference type="MGI" id="MGI:2147191">
    <property type="gene designation" value="Tnfaip8"/>
</dbReference>
<dbReference type="VEuPathDB" id="HostDB:ENSMUSG00000062210"/>
<dbReference type="eggNOG" id="ENOG502S00N">
    <property type="taxonomic scope" value="Eukaryota"/>
</dbReference>
<dbReference type="GeneTree" id="ENSGT00390000003488"/>
<dbReference type="HOGENOM" id="CLU_1942921_0_0_1"/>
<dbReference type="InParanoid" id="Q921Z5"/>
<dbReference type="Reactome" id="R-MMU-1483255">
    <property type="pathway name" value="PI Metabolism"/>
</dbReference>
<dbReference type="BioGRID-ORCS" id="106869">
    <property type="hits" value="3 hits in 78 CRISPR screens"/>
</dbReference>
<dbReference type="ChiTaRS" id="Tnfaip8">
    <property type="organism name" value="mouse"/>
</dbReference>
<dbReference type="PRO" id="PR:Q921Z5"/>
<dbReference type="Proteomes" id="UP000000589">
    <property type="component" value="Chromosome 18"/>
</dbReference>
<dbReference type="RNAct" id="Q921Z5">
    <property type="molecule type" value="protein"/>
</dbReference>
<dbReference type="Bgee" id="ENSMUSG00000062210">
    <property type="expression patterns" value="Expressed in gastrula and 263 other cell types or tissues"/>
</dbReference>
<dbReference type="ExpressionAtlas" id="Q921Z5">
    <property type="expression patterns" value="baseline and differential"/>
</dbReference>
<dbReference type="GO" id="GO:0005737">
    <property type="term" value="C:cytoplasm"/>
    <property type="evidence" value="ECO:0000250"/>
    <property type="project" value="UniProtKB"/>
</dbReference>
<dbReference type="GO" id="GO:0043027">
    <property type="term" value="F:cysteine-type endopeptidase inhibitor activity involved in apoptotic process"/>
    <property type="evidence" value="ECO:0000250"/>
    <property type="project" value="UniProtKB"/>
</dbReference>
<dbReference type="GO" id="GO:0140313">
    <property type="term" value="F:molecular sequestering activity"/>
    <property type="evidence" value="ECO:0000269"/>
    <property type="project" value="DisProt"/>
</dbReference>
<dbReference type="GO" id="GO:0036094">
    <property type="term" value="F:small molecule binding"/>
    <property type="evidence" value="ECO:0000269"/>
    <property type="project" value="DisProt"/>
</dbReference>
<dbReference type="GO" id="GO:0006915">
    <property type="term" value="P:apoptotic process"/>
    <property type="evidence" value="ECO:0007669"/>
    <property type="project" value="UniProtKB-KW"/>
</dbReference>
<dbReference type="GO" id="GO:0050830">
    <property type="term" value="P:defense response to Gram-positive bacterium"/>
    <property type="evidence" value="ECO:0000315"/>
    <property type="project" value="MGI"/>
</dbReference>
<dbReference type="GO" id="GO:0043065">
    <property type="term" value="P:positive regulation of apoptotic process"/>
    <property type="evidence" value="ECO:0000250"/>
    <property type="project" value="UniProtKB"/>
</dbReference>
<dbReference type="DisProt" id="DP02802"/>
<dbReference type="FunFam" id="1.20.1440.160:FF:000001">
    <property type="entry name" value="Tumor necrosis factor alpha-induced protein 8-like 1"/>
    <property type="match status" value="1"/>
</dbReference>
<dbReference type="Gene3D" id="1.20.1440.160">
    <property type="entry name" value="Tumor necrosis factor alpha-induced protein 8-like"/>
    <property type="match status" value="1"/>
</dbReference>
<dbReference type="InterPro" id="IPR008477">
    <property type="entry name" value="TNFAIP8-like"/>
</dbReference>
<dbReference type="InterPro" id="IPR038355">
    <property type="entry name" value="TNFAIP8_sf"/>
</dbReference>
<dbReference type="PANTHER" id="PTHR12757:SF3">
    <property type="entry name" value="TUMOR NECROSIS FACTOR ALPHA-INDUCED PROTEIN 8"/>
    <property type="match status" value="1"/>
</dbReference>
<dbReference type="PANTHER" id="PTHR12757">
    <property type="entry name" value="TUMOR NECROSIS FACTOR INDUCED PROTEIN"/>
    <property type="match status" value="1"/>
</dbReference>
<dbReference type="Pfam" id="PF05527">
    <property type="entry name" value="DUF758"/>
    <property type="match status" value="1"/>
</dbReference>
<proteinExistence type="evidence at protein level"/>
<sequence length="198" mass="22960">MLSEAEEPREVATDVFNSKNLAVQAQKKILGKMVSKSIATTLIDDTSSEVLDELYRVTKEYTQNKKEAERVIKNLIKTVIKLAVLHRNNQFNQDELALMEKFKKKVHQLAMTVVSFHQVEYTFDRNVLSRLLNECRELLHEIIQRHLTAKSHGRVNNVFDHFSDCDFLAALYNPFGKFKPHLQKLCDGINKMLDEENI</sequence>
<feature type="chain" id="PRO_0000285719" description="Tumor necrosis factor alpha-induced protein 8">
    <location>
        <begin position="1"/>
        <end position="198"/>
    </location>
</feature>
<feature type="coiled-coil region" evidence="2">
    <location>
        <begin position="49"/>
        <end position="83"/>
    </location>
</feature>
<feature type="splice variant" id="VSP_024900" description="In isoform 2." evidence="3">
    <original>MLSEAEEPREV</original>
    <variation>M</variation>
    <location>
        <begin position="1"/>
        <end position="11"/>
    </location>
</feature>
<feature type="splice variant" id="VSP_024901" description="In isoform 2." evidence="3">
    <original>VEYTFDRNVLSRLLNECRELLHEIIQRHLTAKSHGRVNNVFDHFSDCDFLAALYNPFGKFKPHLQKLCDGINKMLDEENI</original>
    <variation>IVIDLQELNLRQSNRMLRKAKKTVHLKS</variation>
    <location>
        <begin position="119"/>
        <end position="198"/>
    </location>
</feature>
<feature type="sequence conflict" description="In Ref. 1; BAE29996." evidence="4" ref="1">
    <original>K</original>
    <variation>Q</variation>
    <location>
        <position position="19"/>
    </location>
</feature>
<feature type="sequence conflict" description="In Ref. 1; BAE30559/BAE31209/BAE29567." evidence="4" ref="1">
    <original>K</original>
    <variation>N</variation>
    <location>
        <position position="104"/>
    </location>
</feature>
<feature type="sequence conflict" description="In Ref. 1; BAC41167." evidence="4" ref="1">
    <original>N</original>
    <variation>K</variation>
    <location>
        <position position="190"/>
    </location>
</feature>
<feature type="helix" evidence="5">
    <location>
        <begin position="19"/>
        <end position="33"/>
    </location>
</feature>
<feature type="helix" evidence="5">
    <location>
        <begin position="35"/>
        <end position="39"/>
    </location>
</feature>
<feature type="turn" evidence="5">
    <location>
        <begin position="40"/>
        <end position="42"/>
    </location>
</feature>
<feature type="helix" evidence="5">
    <location>
        <begin position="45"/>
        <end position="62"/>
    </location>
</feature>
<feature type="helix" evidence="5">
    <location>
        <begin position="65"/>
        <end position="87"/>
    </location>
</feature>
<feature type="helix" evidence="5">
    <location>
        <begin position="93"/>
        <end position="118"/>
    </location>
</feature>
<feature type="helix" evidence="5">
    <location>
        <begin position="125"/>
        <end position="143"/>
    </location>
</feature>
<feature type="turn" evidence="5">
    <location>
        <begin position="144"/>
        <end position="146"/>
    </location>
</feature>
<feature type="helix" evidence="5">
    <location>
        <begin position="149"/>
        <end position="162"/>
    </location>
</feature>
<feature type="helix" evidence="5">
    <location>
        <begin position="165"/>
        <end position="171"/>
    </location>
</feature>
<feature type="helix" evidence="5">
    <location>
        <begin position="179"/>
        <end position="194"/>
    </location>
</feature>
<protein>
    <recommendedName>
        <fullName>Tumor necrosis factor alpha-induced protein 8</fullName>
        <shortName>TNF alpha-induced protein 8</shortName>
    </recommendedName>
</protein>
<accession>Q921Z5</accession>
<accession>Q3TQS5</accession>
<accession>Q3U9V7</accession>
<accession>Q3UBG8</accession>
<accession>Q8BTH4</accession>
<reference key="1">
    <citation type="journal article" date="2005" name="Science">
        <title>The transcriptional landscape of the mammalian genome.</title>
        <authorList>
            <person name="Carninci P."/>
            <person name="Kasukawa T."/>
            <person name="Katayama S."/>
            <person name="Gough J."/>
            <person name="Frith M.C."/>
            <person name="Maeda N."/>
            <person name="Oyama R."/>
            <person name="Ravasi T."/>
            <person name="Lenhard B."/>
            <person name="Wells C."/>
            <person name="Kodzius R."/>
            <person name="Shimokawa K."/>
            <person name="Bajic V.B."/>
            <person name="Brenner S.E."/>
            <person name="Batalov S."/>
            <person name="Forrest A.R."/>
            <person name="Zavolan M."/>
            <person name="Davis M.J."/>
            <person name="Wilming L.G."/>
            <person name="Aidinis V."/>
            <person name="Allen J.E."/>
            <person name="Ambesi-Impiombato A."/>
            <person name="Apweiler R."/>
            <person name="Aturaliya R.N."/>
            <person name="Bailey T.L."/>
            <person name="Bansal M."/>
            <person name="Baxter L."/>
            <person name="Beisel K.W."/>
            <person name="Bersano T."/>
            <person name="Bono H."/>
            <person name="Chalk A.M."/>
            <person name="Chiu K.P."/>
            <person name="Choudhary V."/>
            <person name="Christoffels A."/>
            <person name="Clutterbuck D.R."/>
            <person name="Crowe M.L."/>
            <person name="Dalla E."/>
            <person name="Dalrymple B.P."/>
            <person name="de Bono B."/>
            <person name="Della Gatta G."/>
            <person name="di Bernardo D."/>
            <person name="Down T."/>
            <person name="Engstrom P."/>
            <person name="Fagiolini M."/>
            <person name="Faulkner G."/>
            <person name="Fletcher C.F."/>
            <person name="Fukushima T."/>
            <person name="Furuno M."/>
            <person name="Futaki S."/>
            <person name="Gariboldi M."/>
            <person name="Georgii-Hemming P."/>
            <person name="Gingeras T.R."/>
            <person name="Gojobori T."/>
            <person name="Green R.E."/>
            <person name="Gustincich S."/>
            <person name="Harbers M."/>
            <person name="Hayashi Y."/>
            <person name="Hensch T.K."/>
            <person name="Hirokawa N."/>
            <person name="Hill D."/>
            <person name="Huminiecki L."/>
            <person name="Iacono M."/>
            <person name="Ikeo K."/>
            <person name="Iwama A."/>
            <person name="Ishikawa T."/>
            <person name="Jakt M."/>
            <person name="Kanapin A."/>
            <person name="Katoh M."/>
            <person name="Kawasawa Y."/>
            <person name="Kelso J."/>
            <person name="Kitamura H."/>
            <person name="Kitano H."/>
            <person name="Kollias G."/>
            <person name="Krishnan S.P."/>
            <person name="Kruger A."/>
            <person name="Kummerfeld S.K."/>
            <person name="Kurochkin I.V."/>
            <person name="Lareau L.F."/>
            <person name="Lazarevic D."/>
            <person name="Lipovich L."/>
            <person name="Liu J."/>
            <person name="Liuni S."/>
            <person name="McWilliam S."/>
            <person name="Madan Babu M."/>
            <person name="Madera M."/>
            <person name="Marchionni L."/>
            <person name="Matsuda H."/>
            <person name="Matsuzawa S."/>
            <person name="Miki H."/>
            <person name="Mignone F."/>
            <person name="Miyake S."/>
            <person name="Morris K."/>
            <person name="Mottagui-Tabar S."/>
            <person name="Mulder N."/>
            <person name="Nakano N."/>
            <person name="Nakauchi H."/>
            <person name="Ng P."/>
            <person name="Nilsson R."/>
            <person name="Nishiguchi S."/>
            <person name="Nishikawa S."/>
            <person name="Nori F."/>
            <person name="Ohara O."/>
            <person name="Okazaki Y."/>
            <person name="Orlando V."/>
            <person name="Pang K.C."/>
            <person name="Pavan W.J."/>
            <person name="Pavesi G."/>
            <person name="Pesole G."/>
            <person name="Petrovsky N."/>
            <person name="Piazza S."/>
            <person name="Reed J."/>
            <person name="Reid J.F."/>
            <person name="Ring B.Z."/>
            <person name="Ringwald M."/>
            <person name="Rost B."/>
            <person name="Ruan Y."/>
            <person name="Salzberg S.L."/>
            <person name="Sandelin A."/>
            <person name="Schneider C."/>
            <person name="Schoenbach C."/>
            <person name="Sekiguchi K."/>
            <person name="Semple C.A."/>
            <person name="Seno S."/>
            <person name="Sessa L."/>
            <person name="Sheng Y."/>
            <person name="Shibata Y."/>
            <person name="Shimada H."/>
            <person name="Shimada K."/>
            <person name="Silva D."/>
            <person name="Sinclair B."/>
            <person name="Sperling S."/>
            <person name="Stupka E."/>
            <person name="Sugiura K."/>
            <person name="Sultana R."/>
            <person name="Takenaka Y."/>
            <person name="Taki K."/>
            <person name="Tammoja K."/>
            <person name="Tan S.L."/>
            <person name="Tang S."/>
            <person name="Taylor M.S."/>
            <person name="Tegner J."/>
            <person name="Teichmann S.A."/>
            <person name="Ueda H.R."/>
            <person name="van Nimwegen E."/>
            <person name="Verardo R."/>
            <person name="Wei C.L."/>
            <person name="Yagi K."/>
            <person name="Yamanishi H."/>
            <person name="Zabarovsky E."/>
            <person name="Zhu S."/>
            <person name="Zimmer A."/>
            <person name="Hide W."/>
            <person name="Bult C."/>
            <person name="Grimmond S.M."/>
            <person name="Teasdale R.D."/>
            <person name="Liu E.T."/>
            <person name="Brusic V."/>
            <person name="Quackenbush J."/>
            <person name="Wahlestedt C."/>
            <person name="Mattick J.S."/>
            <person name="Hume D.A."/>
            <person name="Kai C."/>
            <person name="Sasaki D."/>
            <person name="Tomaru Y."/>
            <person name="Fukuda S."/>
            <person name="Kanamori-Katayama M."/>
            <person name="Suzuki M."/>
            <person name="Aoki J."/>
            <person name="Arakawa T."/>
            <person name="Iida J."/>
            <person name="Imamura K."/>
            <person name="Itoh M."/>
            <person name="Kato T."/>
            <person name="Kawaji H."/>
            <person name="Kawagashira N."/>
            <person name="Kawashima T."/>
            <person name="Kojima M."/>
            <person name="Kondo S."/>
            <person name="Konno H."/>
            <person name="Nakano K."/>
            <person name="Ninomiya N."/>
            <person name="Nishio T."/>
            <person name="Okada M."/>
            <person name="Plessy C."/>
            <person name="Shibata K."/>
            <person name="Shiraki T."/>
            <person name="Suzuki S."/>
            <person name="Tagami M."/>
            <person name="Waki K."/>
            <person name="Watahiki A."/>
            <person name="Okamura-Oho Y."/>
            <person name="Suzuki H."/>
            <person name="Kawai J."/>
            <person name="Hayashizaki Y."/>
        </authorList>
    </citation>
    <scope>NUCLEOTIDE SEQUENCE [LARGE SCALE MRNA] (ISOFORMS 1 AND 2)</scope>
    <source>
        <strain>C57BL/6J</strain>
        <tissue>Bone marrow</tissue>
        <tissue>Egg</tissue>
        <tissue>Lung</tissue>
    </source>
</reference>
<reference key="2">
    <citation type="journal article" date="2004" name="Genome Res.">
        <title>The status, quality, and expansion of the NIH full-length cDNA project: the Mammalian Gene Collection (MGC).</title>
        <authorList>
            <consortium name="The MGC Project Team"/>
        </authorList>
    </citation>
    <scope>NUCLEOTIDE SEQUENCE [LARGE SCALE MRNA] (ISOFORM 1)</scope>
    <source>
        <strain>FVB/N</strain>
        <tissue>Mammary tumor</tissue>
    </source>
</reference>
<reference key="3">
    <citation type="journal article" date="2010" name="Cell">
        <title>A tissue-specific atlas of mouse protein phosphorylation and expression.</title>
        <authorList>
            <person name="Huttlin E.L."/>
            <person name="Jedrychowski M.P."/>
            <person name="Elias J.E."/>
            <person name="Goswami T."/>
            <person name="Rad R."/>
            <person name="Beausoleil S.A."/>
            <person name="Villen J."/>
            <person name="Haas W."/>
            <person name="Sowa M.E."/>
            <person name="Gygi S.P."/>
        </authorList>
    </citation>
    <scope>IDENTIFICATION BY MASS SPECTROMETRY [LARGE SCALE ANALYSIS]</scope>
    <source>
        <tissue>Brain</tissue>
        <tissue>Heart</tissue>
        <tissue>Kidney</tissue>
        <tissue>Lung</tissue>
        <tissue>Pancreas</tissue>
        <tissue>Spleen</tissue>
        <tissue>Testis</tissue>
    </source>
</reference>
<keyword id="KW-0002">3D-structure</keyword>
<keyword id="KW-0025">Alternative splicing</keyword>
<keyword id="KW-0053">Apoptosis</keyword>
<keyword id="KW-0175">Coiled coil</keyword>
<keyword id="KW-0963">Cytoplasm</keyword>
<keyword id="KW-1185">Reference proteome</keyword>
<evidence type="ECO:0000250" key="1"/>
<evidence type="ECO:0000255" key="2"/>
<evidence type="ECO:0000303" key="3">
    <source>
    </source>
</evidence>
<evidence type="ECO:0000305" key="4"/>
<evidence type="ECO:0007829" key="5">
    <source>
        <dbReference type="PDB" id="5JXD"/>
    </source>
</evidence>
<organism>
    <name type="scientific">Mus musculus</name>
    <name type="common">Mouse</name>
    <dbReference type="NCBI Taxonomy" id="10090"/>
    <lineage>
        <taxon>Eukaryota</taxon>
        <taxon>Metazoa</taxon>
        <taxon>Chordata</taxon>
        <taxon>Craniata</taxon>
        <taxon>Vertebrata</taxon>
        <taxon>Euteleostomi</taxon>
        <taxon>Mammalia</taxon>
        <taxon>Eutheria</taxon>
        <taxon>Euarchontoglires</taxon>
        <taxon>Glires</taxon>
        <taxon>Rodentia</taxon>
        <taxon>Myomorpha</taxon>
        <taxon>Muroidea</taxon>
        <taxon>Muridae</taxon>
        <taxon>Murinae</taxon>
        <taxon>Mus</taxon>
        <taxon>Mus</taxon>
    </lineage>
</organism>